<keyword id="KW-0687">Ribonucleoprotein</keyword>
<keyword id="KW-0689">Ribosomal protein</keyword>
<reference key="1">
    <citation type="submission" date="2005-03" db="EMBL/GenBank/DDBJ databases">
        <title>Comparison of the complete genome sequences of Rhodococcus erythropolis PR4 and Rhodococcus opacus B4.</title>
        <authorList>
            <person name="Takarada H."/>
            <person name="Sekine M."/>
            <person name="Hosoyama A."/>
            <person name="Yamada R."/>
            <person name="Fujisawa T."/>
            <person name="Omata S."/>
            <person name="Shimizu A."/>
            <person name="Tsukatani N."/>
            <person name="Tanikawa S."/>
            <person name="Fujita N."/>
            <person name="Harayama S."/>
        </authorList>
    </citation>
    <scope>NUCLEOTIDE SEQUENCE [LARGE SCALE GENOMIC DNA]</scope>
    <source>
        <strain>PR4 / NBRC 100887</strain>
    </source>
</reference>
<evidence type="ECO:0000255" key="1">
    <source>
        <dbReference type="HAMAP-Rule" id="MF_00508"/>
    </source>
</evidence>
<evidence type="ECO:0000305" key="2"/>
<name>RS10_RHOE4</name>
<sequence length="101" mass="11502">MAGQKIRIRLKAYDHEAIDASARKIVETVTRTGARVVGPVPLPTEKNVYCVIRSPHKYKDSREHFEMRTHKRLIDILDPTPKTVDALMRIDLPASVDVNIQ</sequence>
<gene>
    <name evidence="1" type="primary">rpsJ</name>
    <name type="ordered locus">RER_18510</name>
</gene>
<proteinExistence type="inferred from homology"/>
<organism>
    <name type="scientific">Rhodococcus erythropolis (strain PR4 / NBRC 100887)</name>
    <dbReference type="NCBI Taxonomy" id="234621"/>
    <lineage>
        <taxon>Bacteria</taxon>
        <taxon>Bacillati</taxon>
        <taxon>Actinomycetota</taxon>
        <taxon>Actinomycetes</taxon>
        <taxon>Mycobacteriales</taxon>
        <taxon>Nocardiaceae</taxon>
        <taxon>Rhodococcus</taxon>
        <taxon>Rhodococcus erythropolis group</taxon>
    </lineage>
</organism>
<comment type="function">
    <text evidence="1">Involved in the binding of tRNA to the ribosomes.</text>
</comment>
<comment type="subunit">
    <text evidence="1">Part of the 30S ribosomal subunit.</text>
</comment>
<comment type="similarity">
    <text evidence="1">Belongs to the universal ribosomal protein uS10 family.</text>
</comment>
<dbReference type="EMBL" id="AP008957">
    <property type="protein sequence ID" value="BAH32559.1"/>
    <property type="molecule type" value="Genomic_DNA"/>
</dbReference>
<dbReference type="RefSeq" id="WP_003938093.1">
    <property type="nucleotide sequence ID" value="NC_012490.1"/>
</dbReference>
<dbReference type="SMR" id="C0ZW24"/>
<dbReference type="GeneID" id="98053541"/>
<dbReference type="KEGG" id="rer:RER_18510"/>
<dbReference type="eggNOG" id="COG0051">
    <property type="taxonomic scope" value="Bacteria"/>
</dbReference>
<dbReference type="HOGENOM" id="CLU_122625_1_3_11"/>
<dbReference type="Proteomes" id="UP000002204">
    <property type="component" value="Chromosome"/>
</dbReference>
<dbReference type="GO" id="GO:1990904">
    <property type="term" value="C:ribonucleoprotein complex"/>
    <property type="evidence" value="ECO:0007669"/>
    <property type="project" value="UniProtKB-KW"/>
</dbReference>
<dbReference type="GO" id="GO:0005840">
    <property type="term" value="C:ribosome"/>
    <property type="evidence" value="ECO:0007669"/>
    <property type="project" value="UniProtKB-KW"/>
</dbReference>
<dbReference type="GO" id="GO:0003735">
    <property type="term" value="F:structural constituent of ribosome"/>
    <property type="evidence" value="ECO:0007669"/>
    <property type="project" value="InterPro"/>
</dbReference>
<dbReference type="GO" id="GO:0000049">
    <property type="term" value="F:tRNA binding"/>
    <property type="evidence" value="ECO:0007669"/>
    <property type="project" value="UniProtKB-UniRule"/>
</dbReference>
<dbReference type="GO" id="GO:0006412">
    <property type="term" value="P:translation"/>
    <property type="evidence" value="ECO:0007669"/>
    <property type="project" value="UniProtKB-UniRule"/>
</dbReference>
<dbReference type="FunFam" id="3.30.70.600:FF:000001">
    <property type="entry name" value="30S ribosomal protein S10"/>
    <property type="match status" value="1"/>
</dbReference>
<dbReference type="Gene3D" id="3.30.70.600">
    <property type="entry name" value="Ribosomal protein S10 domain"/>
    <property type="match status" value="1"/>
</dbReference>
<dbReference type="HAMAP" id="MF_00508">
    <property type="entry name" value="Ribosomal_uS10"/>
    <property type="match status" value="1"/>
</dbReference>
<dbReference type="InterPro" id="IPR001848">
    <property type="entry name" value="Ribosomal_uS10"/>
</dbReference>
<dbReference type="InterPro" id="IPR018268">
    <property type="entry name" value="Ribosomal_uS10_CS"/>
</dbReference>
<dbReference type="InterPro" id="IPR027486">
    <property type="entry name" value="Ribosomal_uS10_dom"/>
</dbReference>
<dbReference type="InterPro" id="IPR036838">
    <property type="entry name" value="Ribosomal_uS10_dom_sf"/>
</dbReference>
<dbReference type="NCBIfam" id="NF001861">
    <property type="entry name" value="PRK00596.1"/>
    <property type="match status" value="1"/>
</dbReference>
<dbReference type="NCBIfam" id="TIGR01049">
    <property type="entry name" value="rpsJ_bact"/>
    <property type="match status" value="1"/>
</dbReference>
<dbReference type="PANTHER" id="PTHR11700">
    <property type="entry name" value="30S RIBOSOMAL PROTEIN S10 FAMILY MEMBER"/>
    <property type="match status" value="1"/>
</dbReference>
<dbReference type="Pfam" id="PF00338">
    <property type="entry name" value="Ribosomal_S10"/>
    <property type="match status" value="1"/>
</dbReference>
<dbReference type="PRINTS" id="PR00971">
    <property type="entry name" value="RIBOSOMALS10"/>
</dbReference>
<dbReference type="SMART" id="SM01403">
    <property type="entry name" value="Ribosomal_S10"/>
    <property type="match status" value="1"/>
</dbReference>
<dbReference type="SUPFAM" id="SSF54999">
    <property type="entry name" value="Ribosomal protein S10"/>
    <property type="match status" value="1"/>
</dbReference>
<dbReference type="PROSITE" id="PS00361">
    <property type="entry name" value="RIBOSOMAL_S10"/>
    <property type="match status" value="1"/>
</dbReference>
<protein>
    <recommendedName>
        <fullName evidence="1">Small ribosomal subunit protein uS10</fullName>
    </recommendedName>
    <alternativeName>
        <fullName evidence="2">30S ribosomal protein S10</fullName>
    </alternativeName>
</protein>
<feature type="chain" id="PRO_1000206594" description="Small ribosomal subunit protein uS10">
    <location>
        <begin position="1"/>
        <end position="101"/>
    </location>
</feature>
<accession>C0ZW24</accession>